<protein>
    <recommendedName>
        <fullName evidence="1">UPF0102 protein RPB_0420</fullName>
    </recommendedName>
</protein>
<proteinExistence type="inferred from homology"/>
<dbReference type="EMBL" id="CP000250">
    <property type="protein sequence ID" value="ABD05131.1"/>
    <property type="molecule type" value="Genomic_DNA"/>
</dbReference>
<dbReference type="RefSeq" id="WP_011439321.1">
    <property type="nucleotide sequence ID" value="NC_007778.1"/>
</dbReference>
<dbReference type="SMR" id="Q2J329"/>
<dbReference type="STRING" id="316058.RPB_0420"/>
<dbReference type="KEGG" id="rpb:RPB_0420"/>
<dbReference type="eggNOG" id="COG0792">
    <property type="taxonomic scope" value="Bacteria"/>
</dbReference>
<dbReference type="HOGENOM" id="CLU_115353_0_2_5"/>
<dbReference type="OrthoDB" id="9812968at2"/>
<dbReference type="Proteomes" id="UP000008809">
    <property type="component" value="Chromosome"/>
</dbReference>
<dbReference type="GO" id="GO:0003676">
    <property type="term" value="F:nucleic acid binding"/>
    <property type="evidence" value="ECO:0007669"/>
    <property type="project" value="InterPro"/>
</dbReference>
<dbReference type="Gene3D" id="3.40.1350.10">
    <property type="match status" value="1"/>
</dbReference>
<dbReference type="HAMAP" id="MF_00048">
    <property type="entry name" value="UPF0102"/>
    <property type="match status" value="1"/>
</dbReference>
<dbReference type="InterPro" id="IPR011335">
    <property type="entry name" value="Restrct_endonuc-II-like"/>
</dbReference>
<dbReference type="InterPro" id="IPR011856">
    <property type="entry name" value="tRNA_endonuc-like_dom_sf"/>
</dbReference>
<dbReference type="InterPro" id="IPR003509">
    <property type="entry name" value="UPF0102_YraN-like"/>
</dbReference>
<dbReference type="NCBIfam" id="NF009150">
    <property type="entry name" value="PRK12497.1-3"/>
    <property type="match status" value="1"/>
</dbReference>
<dbReference type="NCBIfam" id="NF009151">
    <property type="entry name" value="PRK12497.1-5"/>
    <property type="match status" value="1"/>
</dbReference>
<dbReference type="NCBIfam" id="TIGR00252">
    <property type="entry name" value="YraN family protein"/>
    <property type="match status" value="1"/>
</dbReference>
<dbReference type="PANTHER" id="PTHR34039">
    <property type="entry name" value="UPF0102 PROTEIN YRAN"/>
    <property type="match status" value="1"/>
</dbReference>
<dbReference type="PANTHER" id="PTHR34039:SF1">
    <property type="entry name" value="UPF0102 PROTEIN YRAN"/>
    <property type="match status" value="1"/>
</dbReference>
<dbReference type="Pfam" id="PF02021">
    <property type="entry name" value="UPF0102"/>
    <property type="match status" value="1"/>
</dbReference>
<dbReference type="SUPFAM" id="SSF52980">
    <property type="entry name" value="Restriction endonuclease-like"/>
    <property type="match status" value="1"/>
</dbReference>
<gene>
    <name type="ordered locus">RPB_0420</name>
</gene>
<comment type="similarity">
    <text evidence="1">Belongs to the UPF0102 family.</text>
</comment>
<accession>Q2J329</accession>
<reference key="1">
    <citation type="submission" date="2006-01" db="EMBL/GenBank/DDBJ databases">
        <title>Complete sequence of Rhodopseudomonas palustris HaA2.</title>
        <authorList>
            <consortium name="US DOE Joint Genome Institute"/>
            <person name="Copeland A."/>
            <person name="Lucas S."/>
            <person name="Lapidus A."/>
            <person name="Barry K."/>
            <person name="Detter J.C."/>
            <person name="Glavina T."/>
            <person name="Hammon N."/>
            <person name="Israni S."/>
            <person name="Pitluck S."/>
            <person name="Chain P."/>
            <person name="Malfatti S."/>
            <person name="Shin M."/>
            <person name="Vergez L."/>
            <person name="Schmutz J."/>
            <person name="Larimer F."/>
            <person name="Land M."/>
            <person name="Hauser L."/>
            <person name="Pelletier D.A."/>
            <person name="Kyrpides N."/>
            <person name="Anderson I."/>
            <person name="Oda Y."/>
            <person name="Harwood C.S."/>
            <person name="Richardson P."/>
        </authorList>
    </citation>
    <scope>NUCLEOTIDE SEQUENCE [LARGE SCALE GENOMIC DNA]</scope>
    <source>
        <strain>HaA2</strain>
    </source>
</reference>
<organism>
    <name type="scientific">Rhodopseudomonas palustris (strain HaA2)</name>
    <dbReference type="NCBI Taxonomy" id="316058"/>
    <lineage>
        <taxon>Bacteria</taxon>
        <taxon>Pseudomonadati</taxon>
        <taxon>Pseudomonadota</taxon>
        <taxon>Alphaproteobacteria</taxon>
        <taxon>Hyphomicrobiales</taxon>
        <taxon>Nitrobacteraceae</taxon>
        <taxon>Rhodopseudomonas</taxon>
    </lineage>
</organism>
<sequence length="128" mass="14164">MAKTKHPPAPDRVAAFQTGISAETRAAAYLMAKGYRILARRFKTPCGEIDIVAQRRQLIAFVEVKARARLDDAAYAVTPRQQQRIIAAAEAWLMANPDHATFELRFDAVLVAPKRLPQHLPAAFDASP</sequence>
<keyword id="KW-1185">Reference proteome</keyword>
<feature type="chain" id="PRO_0000336252" description="UPF0102 protein RPB_0420">
    <location>
        <begin position="1"/>
        <end position="128"/>
    </location>
</feature>
<name>Y420_RHOP2</name>
<evidence type="ECO:0000255" key="1">
    <source>
        <dbReference type="HAMAP-Rule" id="MF_00048"/>
    </source>
</evidence>